<sequence length="249" mass="27008">MEGFSGLFAASEPSSIPSAPGPPSVVPTCTGAFVSGKTQTSTPTVPGPPLPIPPPLSSSSSGEDSSRRPAAGPFYILRELPGLSDLTGSVNLILHYNLEHSFSKFCGKKMKEKLSNFLPDLPGMIDTPGAQDNSSLRSLIEKPPICGNSFTPLTGALLTGFRLHTGPLPEQCRLMHIQPPKKKNKKHKQSRTQEPAPPETPSDSDHRKKKKKQREDDPERRRKKKDKKKKKSRHSPEHPGAGSSQSGLR</sequence>
<protein>
    <recommendedName>
        <fullName>Mediator of RNA polymerase II transcription subunit 19</fullName>
    </recommendedName>
    <alternativeName>
        <fullName>Mediator complex subunit 19</fullName>
    </alternativeName>
</protein>
<proteinExistence type="evidence at transcript level"/>
<evidence type="ECO:0000250" key="1"/>
<evidence type="ECO:0000256" key="2">
    <source>
        <dbReference type="SAM" id="MobiDB-lite"/>
    </source>
</evidence>
<evidence type="ECO:0000305" key="3"/>
<accession>Q07FY3</accession>
<accession>Q5I0A6</accession>
<name>MED19_XENTR</name>
<keyword id="KW-0010">Activator</keyword>
<keyword id="KW-0539">Nucleus</keyword>
<keyword id="KW-1185">Reference proteome</keyword>
<keyword id="KW-0804">Transcription</keyword>
<keyword id="KW-0805">Transcription regulation</keyword>
<reference key="1">
    <citation type="submission" date="2006-10" db="EMBL/GenBank/DDBJ databases">
        <authorList>
            <consortium name="Sanger Xenopus tropicalis EST/cDNA project"/>
        </authorList>
    </citation>
    <scope>NUCLEOTIDE SEQUENCE [LARGE SCALE MRNA]</scope>
    <source>
        <tissue>Embryo</tissue>
    </source>
</reference>
<reference key="2">
    <citation type="submission" date="2004-12" db="EMBL/GenBank/DDBJ databases">
        <authorList>
            <consortium name="NIH - Xenopus Gene Collection (XGC) project"/>
        </authorList>
    </citation>
    <scope>NUCLEOTIDE SEQUENCE [LARGE SCALE MRNA] OF 4-249</scope>
    <source>
        <tissue>Embryo</tissue>
    </source>
</reference>
<comment type="function">
    <text evidence="1">Component of the Mediator complex, a coactivator involved in the regulated transcription of nearly all RNA polymerase II-dependent genes. Mediator functions as a bridge to convey information from gene-specific regulatory proteins to the basal RNA polymerase II transcription machinery. Mediator is recruited to promoters by direct interactions with regulatory proteins and serves as a scaffold for the assembly of a functional preinitiation complex with RNA polymerase II and the general transcription factors (By similarity).</text>
</comment>
<comment type="subunit">
    <text evidence="1">Component of the Mediator complex.</text>
</comment>
<comment type="subcellular location">
    <subcellularLocation>
        <location evidence="3">Nucleus</location>
    </subcellularLocation>
</comment>
<comment type="similarity">
    <text evidence="3">Belongs to the Mediator complex subunit 19 family.</text>
</comment>
<feature type="chain" id="PRO_0000304771" description="Mediator of RNA polymerase II transcription subunit 19">
    <location>
        <begin position="1"/>
        <end position="249"/>
    </location>
</feature>
<feature type="region of interest" description="Disordered" evidence="2">
    <location>
        <begin position="1"/>
        <end position="68"/>
    </location>
</feature>
<feature type="region of interest" description="Disordered" evidence="2">
    <location>
        <begin position="178"/>
        <end position="249"/>
    </location>
</feature>
<feature type="compositionally biased region" description="Low complexity" evidence="2">
    <location>
        <begin position="9"/>
        <end position="18"/>
    </location>
</feature>
<feature type="compositionally biased region" description="Pro residues" evidence="2">
    <location>
        <begin position="45"/>
        <end position="56"/>
    </location>
</feature>
<feature type="compositionally biased region" description="Basic residues" evidence="2">
    <location>
        <begin position="179"/>
        <end position="190"/>
    </location>
</feature>
<feature type="compositionally biased region" description="Basic residues" evidence="2">
    <location>
        <begin position="221"/>
        <end position="233"/>
    </location>
</feature>
<organism>
    <name type="scientific">Xenopus tropicalis</name>
    <name type="common">Western clawed frog</name>
    <name type="synonym">Silurana tropicalis</name>
    <dbReference type="NCBI Taxonomy" id="8364"/>
    <lineage>
        <taxon>Eukaryota</taxon>
        <taxon>Metazoa</taxon>
        <taxon>Chordata</taxon>
        <taxon>Craniata</taxon>
        <taxon>Vertebrata</taxon>
        <taxon>Euteleostomi</taxon>
        <taxon>Amphibia</taxon>
        <taxon>Batrachia</taxon>
        <taxon>Anura</taxon>
        <taxon>Pipoidea</taxon>
        <taxon>Pipidae</taxon>
        <taxon>Xenopodinae</taxon>
        <taxon>Xenopus</taxon>
        <taxon>Silurana</taxon>
    </lineage>
</organism>
<dbReference type="EMBL" id="CR942536">
    <property type="protein sequence ID" value="CAL49313.1"/>
    <property type="molecule type" value="mRNA"/>
</dbReference>
<dbReference type="EMBL" id="BC088543">
    <property type="protein sequence ID" value="AAH88543.1"/>
    <property type="molecule type" value="mRNA"/>
</dbReference>
<dbReference type="RefSeq" id="NP_001095276.1">
    <property type="nucleotide sequence ID" value="NM_001101806.1"/>
</dbReference>
<dbReference type="SMR" id="Q07FY3"/>
<dbReference type="FunCoup" id="Q07FY3">
    <property type="interactions" value="2407"/>
</dbReference>
<dbReference type="STRING" id="8364.ENSXETP00000029560"/>
<dbReference type="GeneID" id="100124299"/>
<dbReference type="KEGG" id="xtr:100124299"/>
<dbReference type="AGR" id="Xenbase:XB-GENE-940493"/>
<dbReference type="CTD" id="219541"/>
<dbReference type="Xenbase" id="XB-GENE-940493">
    <property type="gene designation" value="med19"/>
</dbReference>
<dbReference type="InParanoid" id="Q07FY3"/>
<dbReference type="OMA" id="QRFCGSK"/>
<dbReference type="OrthoDB" id="10044050at2759"/>
<dbReference type="Proteomes" id="UP000008143">
    <property type="component" value="Chromosome 7"/>
</dbReference>
<dbReference type="Bgee" id="ENSXETG00000032150">
    <property type="expression patterns" value="Expressed in gastrula and 12 other cell types or tissues"/>
</dbReference>
<dbReference type="GO" id="GO:0016592">
    <property type="term" value="C:mediator complex"/>
    <property type="evidence" value="ECO:0007669"/>
    <property type="project" value="InterPro"/>
</dbReference>
<dbReference type="GO" id="GO:0003712">
    <property type="term" value="F:transcription coregulator activity"/>
    <property type="evidence" value="ECO:0007669"/>
    <property type="project" value="InterPro"/>
</dbReference>
<dbReference type="GO" id="GO:0006357">
    <property type="term" value="P:regulation of transcription by RNA polymerase II"/>
    <property type="evidence" value="ECO:0007669"/>
    <property type="project" value="InterPro"/>
</dbReference>
<dbReference type="InterPro" id="IPR019403">
    <property type="entry name" value="Mediator_Med19_met"/>
</dbReference>
<dbReference type="PANTHER" id="PTHR22536">
    <property type="entry name" value="LUNG CANCER METASTASIS-RELATED LCMR1 PROTEIN"/>
    <property type="match status" value="1"/>
</dbReference>
<dbReference type="PANTHER" id="PTHR22536:SF1">
    <property type="entry name" value="MEDIATOR OF RNA POLYMERASE II TRANSCRIPTION SUBUNIT 19"/>
    <property type="match status" value="1"/>
</dbReference>
<dbReference type="Pfam" id="PF10278">
    <property type="entry name" value="Med19"/>
    <property type="match status" value="1"/>
</dbReference>
<gene>
    <name type="primary">med19</name>
    <name type="ORF">TEgg003p13.1</name>
</gene>